<keyword id="KW-1003">Cell membrane</keyword>
<keyword id="KW-0285">Flavoprotein</keyword>
<keyword id="KW-0288">FMN</keyword>
<keyword id="KW-0472">Membrane</keyword>
<keyword id="KW-0560">Oxidoreductase</keyword>
<keyword id="KW-0665">Pyrimidine biosynthesis</keyword>
<protein>
    <recommendedName>
        <fullName evidence="1">Dihydroorotate dehydrogenase (quinone)</fullName>
        <ecNumber evidence="1">1.3.5.2</ecNumber>
    </recommendedName>
    <alternativeName>
        <fullName evidence="1">DHOdehase</fullName>
        <shortName evidence="1">DHOD</shortName>
        <shortName evidence="1">DHODase</shortName>
    </alternativeName>
    <alternativeName>
        <fullName evidence="1">Dihydroorotate oxidase</fullName>
    </alternativeName>
</protein>
<organism>
    <name type="scientific">Acinetobacter baumannii (strain ACICU)</name>
    <dbReference type="NCBI Taxonomy" id="405416"/>
    <lineage>
        <taxon>Bacteria</taxon>
        <taxon>Pseudomonadati</taxon>
        <taxon>Pseudomonadota</taxon>
        <taxon>Gammaproteobacteria</taxon>
        <taxon>Moraxellales</taxon>
        <taxon>Moraxellaceae</taxon>
        <taxon>Acinetobacter</taxon>
        <taxon>Acinetobacter calcoaceticus/baumannii complex</taxon>
    </lineage>
</organism>
<name>PYRD_ACIBC</name>
<comment type="function">
    <text evidence="1">Catalyzes the conversion of dihydroorotate to orotate with quinone as electron acceptor.</text>
</comment>
<comment type="catalytic activity">
    <reaction evidence="1">
        <text>(S)-dihydroorotate + a quinone = orotate + a quinol</text>
        <dbReference type="Rhea" id="RHEA:30187"/>
        <dbReference type="ChEBI" id="CHEBI:24646"/>
        <dbReference type="ChEBI" id="CHEBI:30839"/>
        <dbReference type="ChEBI" id="CHEBI:30864"/>
        <dbReference type="ChEBI" id="CHEBI:132124"/>
        <dbReference type="EC" id="1.3.5.2"/>
    </reaction>
</comment>
<comment type="cofactor">
    <cofactor evidence="1">
        <name>FMN</name>
        <dbReference type="ChEBI" id="CHEBI:58210"/>
    </cofactor>
    <text evidence="1">Binds 1 FMN per subunit.</text>
</comment>
<comment type="pathway">
    <text evidence="1">Pyrimidine metabolism; UMP biosynthesis via de novo pathway; orotate from (S)-dihydroorotate (quinone route): step 1/1.</text>
</comment>
<comment type="subunit">
    <text evidence="1">Monomer.</text>
</comment>
<comment type="subcellular location">
    <subcellularLocation>
        <location evidence="1">Cell membrane</location>
        <topology evidence="1">Peripheral membrane protein</topology>
    </subcellularLocation>
</comment>
<comment type="similarity">
    <text evidence="1">Belongs to the dihydroorotate dehydrogenase family. Type 2 subfamily.</text>
</comment>
<dbReference type="EC" id="1.3.5.2" evidence="1"/>
<dbReference type="EMBL" id="CP000863">
    <property type="protein sequence ID" value="ACC57766.1"/>
    <property type="molecule type" value="Genomic_DNA"/>
</dbReference>
<dbReference type="RefSeq" id="WP_000966986.1">
    <property type="nucleotide sequence ID" value="NZ_CP031380.1"/>
</dbReference>
<dbReference type="SMR" id="B2HUT6"/>
<dbReference type="KEGG" id="abc:ACICU_02454"/>
<dbReference type="HOGENOM" id="CLU_013640_2_0_6"/>
<dbReference type="UniPathway" id="UPA00070">
    <property type="reaction ID" value="UER00946"/>
</dbReference>
<dbReference type="Proteomes" id="UP000008839">
    <property type="component" value="Chromosome"/>
</dbReference>
<dbReference type="GO" id="GO:0005737">
    <property type="term" value="C:cytoplasm"/>
    <property type="evidence" value="ECO:0007669"/>
    <property type="project" value="InterPro"/>
</dbReference>
<dbReference type="GO" id="GO:0005886">
    <property type="term" value="C:plasma membrane"/>
    <property type="evidence" value="ECO:0007669"/>
    <property type="project" value="UniProtKB-SubCell"/>
</dbReference>
<dbReference type="GO" id="GO:0106430">
    <property type="term" value="F:dihydroorotate dehydrogenase (quinone) activity"/>
    <property type="evidence" value="ECO:0007669"/>
    <property type="project" value="UniProtKB-EC"/>
</dbReference>
<dbReference type="GO" id="GO:0006207">
    <property type="term" value="P:'de novo' pyrimidine nucleobase biosynthetic process"/>
    <property type="evidence" value="ECO:0007669"/>
    <property type="project" value="InterPro"/>
</dbReference>
<dbReference type="GO" id="GO:0044205">
    <property type="term" value="P:'de novo' UMP biosynthetic process"/>
    <property type="evidence" value="ECO:0007669"/>
    <property type="project" value="UniProtKB-UniRule"/>
</dbReference>
<dbReference type="CDD" id="cd04738">
    <property type="entry name" value="DHOD_2_like"/>
    <property type="match status" value="1"/>
</dbReference>
<dbReference type="FunFam" id="3.20.20.70:FF:000028">
    <property type="entry name" value="Dihydroorotate dehydrogenase (quinone)"/>
    <property type="match status" value="1"/>
</dbReference>
<dbReference type="Gene3D" id="3.20.20.70">
    <property type="entry name" value="Aldolase class I"/>
    <property type="match status" value="1"/>
</dbReference>
<dbReference type="HAMAP" id="MF_00225">
    <property type="entry name" value="DHO_dh_type2"/>
    <property type="match status" value="1"/>
</dbReference>
<dbReference type="InterPro" id="IPR013785">
    <property type="entry name" value="Aldolase_TIM"/>
</dbReference>
<dbReference type="InterPro" id="IPR050074">
    <property type="entry name" value="DHO_dehydrogenase"/>
</dbReference>
<dbReference type="InterPro" id="IPR012135">
    <property type="entry name" value="Dihydroorotate_DH_1_2"/>
</dbReference>
<dbReference type="InterPro" id="IPR005719">
    <property type="entry name" value="Dihydroorotate_DH_2"/>
</dbReference>
<dbReference type="InterPro" id="IPR005720">
    <property type="entry name" value="Dihydroorotate_DH_cat"/>
</dbReference>
<dbReference type="InterPro" id="IPR001295">
    <property type="entry name" value="Dihydroorotate_DH_CS"/>
</dbReference>
<dbReference type="NCBIfam" id="NF003644">
    <property type="entry name" value="PRK05286.1-1"/>
    <property type="match status" value="1"/>
</dbReference>
<dbReference type="NCBIfam" id="NF003645">
    <property type="entry name" value="PRK05286.1-2"/>
    <property type="match status" value="1"/>
</dbReference>
<dbReference type="NCBIfam" id="NF003646">
    <property type="entry name" value="PRK05286.1-4"/>
    <property type="match status" value="1"/>
</dbReference>
<dbReference type="NCBIfam" id="NF003652">
    <property type="entry name" value="PRK05286.2-5"/>
    <property type="match status" value="1"/>
</dbReference>
<dbReference type="NCBIfam" id="TIGR01036">
    <property type="entry name" value="pyrD_sub2"/>
    <property type="match status" value="1"/>
</dbReference>
<dbReference type="PANTHER" id="PTHR48109:SF4">
    <property type="entry name" value="DIHYDROOROTATE DEHYDROGENASE (QUINONE), MITOCHONDRIAL"/>
    <property type="match status" value="1"/>
</dbReference>
<dbReference type="PANTHER" id="PTHR48109">
    <property type="entry name" value="DIHYDROOROTATE DEHYDROGENASE (QUINONE), MITOCHONDRIAL-RELATED"/>
    <property type="match status" value="1"/>
</dbReference>
<dbReference type="Pfam" id="PF01180">
    <property type="entry name" value="DHO_dh"/>
    <property type="match status" value="1"/>
</dbReference>
<dbReference type="PIRSF" id="PIRSF000164">
    <property type="entry name" value="DHO_oxidase"/>
    <property type="match status" value="1"/>
</dbReference>
<dbReference type="SUPFAM" id="SSF51395">
    <property type="entry name" value="FMN-linked oxidoreductases"/>
    <property type="match status" value="1"/>
</dbReference>
<dbReference type="PROSITE" id="PS00911">
    <property type="entry name" value="DHODEHASE_1"/>
    <property type="match status" value="1"/>
</dbReference>
<dbReference type="PROSITE" id="PS00912">
    <property type="entry name" value="DHODEHASE_2"/>
    <property type="match status" value="1"/>
</dbReference>
<reference key="1">
    <citation type="journal article" date="2008" name="Antimicrob. Agents Chemother.">
        <title>Whole-genome pyrosequencing of an epidemic multidrug-resistant Acinetobacter baumannii strain belonging to the European clone II group.</title>
        <authorList>
            <person name="Iacono M."/>
            <person name="Villa L."/>
            <person name="Fortini D."/>
            <person name="Bordoni R."/>
            <person name="Imperi F."/>
            <person name="Bonnal R.J."/>
            <person name="Sicheritz-Ponten T."/>
            <person name="De Bellis G."/>
            <person name="Visca P."/>
            <person name="Cassone A."/>
            <person name="Carattoli A."/>
        </authorList>
    </citation>
    <scope>NUCLEOTIDE SEQUENCE [LARGE SCALE GENOMIC DNA]</scope>
    <source>
        <strain>ACICU</strain>
    </source>
</reference>
<accession>B2HUT6</accession>
<gene>
    <name evidence="1" type="primary">pyrD</name>
    <name type="ordered locus">ACICU_02454</name>
</gene>
<feature type="chain" id="PRO_1000100240" description="Dihydroorotate dehydrogenase (quinone)">
    <location>
        <begin position="1"/>
        <end position="334"/>
    </location>
</feature>
<feature type="active site" description="Nucleophile" evidence="1">
    <location>
        <position position="172"/>
    </location>
</feature>
<feature type="binding site" evidence="1">
    <location>
        <begin position="59"/>
        <end position="63"/>
    </location>
    <ligand>
        <name>FMN</name>
        <dbReference type="ChEBI" id="CHEBI:58210"/>
    </ligand>
</feature>
<feature type="binding site" evidence="1">
    <location>
        <position position="63"/>
    </location>
    <ligand>
        <name>substrate</name>
    </ligand>
</feature>
<feature type="binding site" evidence="1">
    <location>
        <position position="83"/>
    </location>
    <ligand>
        <name>FMN</name>
        <dbReference type="ChEBI" id="CHEBI:58210"/>
    </ligand>
</feature>
<feature type="binding site" evidence="1">
    <location>
        <begin position="108"/>
        <end position="112"/>
    </location>
    <ligand>
        <name>substrate</name>
    </ligand>
</feature>
<feature type="binding site" evidence="1">
    <location>
        <position position="136"/>
    </location>
    <ligand>
        <name>FMN</name>
        <dbReference type="ChEBI" id="CHEBI:58210"/>
    </ligand>
</feature>
<feature type="binding site" evidence="1">
    <location>
        <position position="169"/>
    </location>
    <ligand>
        <name>FMN</name>
        <dbReference type="ChEBI" id="CHEBI:58210"/>
    </ligand>
</feature>
<feature type="binding site" evidence="1">
    <location>
        <position position="169"/>
    </location>
    <ligand>
        <name>substrate</name>
    </ligand>
</feature>
<feature type="binding site" evidence="1">
    <location>
        <position position="174"/>
    </location>
    <ligand>
        <name>substrate</name>
    </ligand>
</feature>
<feature type="binding site" evidence="1">
    <location>
        <position position="214"/>
    </location>
    <ligand>
        <name>FMN</name>
        <dbReference type="ChEBI" id="CHEBI:58210"/>
    </ligand>
</feature>
<feature type="binding site" evidence="1">
    <location>
        <position position="242"/>
    </location>
    <ligand>
        <name>FMN</name>
        <dbReference type="ChEBI" id="CHEBI:58210"/>
    </ligand>
</feature>
<feature type="binding site" evidence="1">
    <location>
        <begin position="243"/>
        <end position="244"/>
    </location>
    <ligand>
        <name>substrate</name>
    </ligand>
</feature>
<feature type="binding site" evidence="1">
    <location>
        <position position="265"/>
    </location>
    <ligand>
        <name>FMN</name>
        <dbReference type="ChEBI" id="CHEBI:58210"/>
    </ligand>
</feature>
<feature type="binding site" evidence="1">
    <location>
        <position position="294"/>
    </location>
    <ligand>
        <name>FMN</name>
        <dbReference type="ChEBI" id="CHEBI:58210"/>
    </ligand>
</feature>
<feature type="binding site" evidence="1">
    <location>
        <begin position="315"/>
        <end position="316"/>
    </location>
    <ligand>
        <name>FMN</name>
        <dbReference type="ChEBI" id="CHEBI:58210"/>
    </ligand>
</feature>
<sequence length="334" mass="36093">MLYSLARPMLFSLAPERAHELTLSMLDKAHKLGMMRQTVEAKPTTCMGIEFPNPVGLAAGLDKNGAHIDALAGLGFGFIEIGTITPRPQSGNPKPRLFRIPEAKAIINRMGFNNDGVDKLIENVKASKFRGILGINIGKNADTPVEKAVDDYLICLEKVYNYASYITVNISSPNTKNLRSLQSGDALTELLQTLKARQLELAEQYNHYVPLVLKVAPDLTAEDVEFISAQLLDFKIDGLIVTNTTLSREGVENLPYGNESGGLSGAPVFEKSTECLRLFAQTLKGQIPLIGVGGILSGEQAAAKQQAGATLVQIYSGLIYTGPTLVKQCVEAMT</sequence>
<evidence type="ECO:0000255" key="1">
    <source>
        <dbReference type="HAMAP-Rule" id="MF_00225"/>
    </source>
</evidence>
<proteinExistence type="inferred from homology"/>